<name>PITM2_MOUSE</name>
<dbReference type="EMBL" id="AF058693">
    <property type="protein sequence ID" value="AAD51375.1"/>
    <property type="molecule type" value="mRNA"/>
</dbReference>
<dbReference type="EMBL" id="AK129364">
    <property type="protein sequence ID" value="BAC98174.1"/>
    <property type="status" value="ALT_INIT"/>
    <property type="molecule type" value="mRNA"/>
</dbReference>
<dbReference type="CCDS" id="CCDS19674.1">
    <molecule id="Q6ZPQ6-2"/>
</dbReference>
<dbReference type="CCDS" id="CCDS71669.1">
    <molecule id="Q6ZPQ6-1"/>
</dbReference>
<dbReference type="RefSeq" id="NP_001276401.1">
    <molecule id="Q6ZPQ6-1"/>
    <property type="nucleotide sequence ID" value="NM_001289472.2"/>
</dbReference>
<dbReference type="RefSeq" id="NP_001411430.1">
    <molecule id="Q6ZPQ6-2"/>
    <property type="nucleotide sequence ID" value="NM_001424501.1"/>
</dbReference>
<dbReference type="RefSeq" id="NP_035386.1">
    <molecule id="Q6ZPQ6-2"/>
    <property type="nucleotide sequence ID" value="NM_011256.4"/>
</dbReference>
<dbReference type="RefSeq" id="XP_017176233.1">
    <property type="nucleotide sequence ID" value="XM_017320744.1"/>
</dbReference>
<dbReference type="RefSeq" id="XP_030110083.1">
    <molecule id="Q6ZPQ6-1"/>
    <property type="nucleotide sequence ID" value="XM_030254223.1"/>
</dbReference>
<dbReference type="RefSeq" id="XP_030110087.1">
    <molecule id="Q6ZPQ6-2"/>
    <property type="nucleotide sequence ID" value="XM_030254227.2"/>
</dbReference>
<dbReference type="SMR" id="Q6ZPQ6"/>
<dbReference type="BioGRID" id="202842">
    <property type="interactions" value="7"/>
</dbReference>
<dbReference type="FunCoup" id="Q6ZPQ6">
    <property type="interactions" value="1073"/>
</dbReference>
<dbReference type="IntAct" id="Q6ZPQ6">
    <property type="interactions" value="4"/>
</dbReference>
<dbReference type="MINT" id="Q6ZPQ6"/>
<dbReference type="STRING" id="10090.ENSMUSP00000124111"/>
<dbReference type="GlyGen" id="Q6ZPQ6">
    <property type="glycosylation" value="2 sites, 1 N-linked glycan (1 site)"/>
</dbReference>
<dbReference type="iPTMnet" id="Q6ZPQ6"/>
<dbReference type="PhosphoSitePlus" id="Q6ZPQ6"/>
<dbReference type="SwissPalm" id="Q6ZPQ6"/>
<dbReference type="jPOST" id="Q6ZPQ6"/>
<dbReference type="PaxDb" id="10090-ENSMUSP00000124111"/>
<dbReference type="ProteomicsDB" id="288172">
    <molecule id="Q6ZPQ6-1"/>
</dbReference>
<dbReference type="ProteomicsDB" id="288173">
    <molecule id="Q6ZPQ6-2"/>
</dbReference>
<dbReference type="Antibodypedia" id="1085">
    <property type="antibodies" value="73 antibodies from 14 providers"/>
</dbReference>
<dbReference type="DNASU" id="19679"/>
<dbReference type="Ensembl" id="ENSMUST00000086123.11">
    <molecule id="Q6ZPQ6-2"/>
    <property type="protein sequence ID" value="ENSMUSP00000083292.5"/>
    <property type="gene ID" value="ENSMUSG00000029406.16"/>
</dbReference>
<dbReference type="Ensembl" id="ENSMUST00000161938.8">
    <molecule id="Q6ZPQ6-1"/>
    <property type="protein sequence ID" value="ENSMUSP00000124111.2"/>
    <property type="gene ID" value="ENSMUSG00000029406.16"/>
</dbReference>
<dbReference type="Ensembl" id="ENSMUST00000162812.8">
    <molecule id="Q6ZPQ6-2"/>
    <property type="protein sequence ID" value="ENSMUSP00000124740.2"/>
    <property type="gene ID" value="ENSMUSG00000029406.16"/>
</dbReference>
<dbReference type="GeneID" id="19679"/>
<dbReference type="KEGG" id="mmu:19679"/>
<dbReference type="UCSC" id="uc008zpb.3">
    <molecule id="Q6ZPQ6-1"/>
    <property type="organism name" value="mouse"/>
</dbReference>
<dbReference type="UCSC" id="uc008zpc.3">
    <molecule id="Q6ZPQ6-2"/>
    <property type="organism name" value="mouse"/>
</dbReference>
<dbReference type="AGR" id="MGI:1336192"/>
<dbReference type="CTD" id="57605"/>
<dbReference type="MGI" id="MGI:1336192">
    <property type="gene designation" value="Pitpnm2"/>
</dbReference>
<dbReference type="VEuPathDB" id="HostDB:ENSMUSG00000029406"/>
<dbReference type="eggNOG" id="KOG3668">
    <property type="taxonomic scope" value="Eukaryota"/>
</dbReference>
<dbReference type="GeneTree" id="ENSGT00940000153849"/>
<dbReference type="HOGENOM" id="CLU_007179_0_0_1"/>
<dbReference type="InParanoid" id="Q6ZPQ6"/>
<dbReference type="OMA" id="CWGRTMT"/>
<dbReference type="OrthoDB" id="10053061at2759"/>
<dbReference type="PhylomeDB" id="Q6ZPQ6"/>
<dbReference type="TreeFam" id="TF312967"/>
<dbReference type="Reactome" id="R-MMU-1483226">
    <property type="pathway name" value="Synthesis of PI"/>
</dbReference>
<dbReference type="BioGRID-ORCS" id="19679">
    <property type="hits" value="1 hit in 78 CRISPR screens"/>
</dbReference>
<dbReference type="CD-CODE" id="CE726F99">
    <property type="entry name" value="Postsynaptic density"/>
</dbReference>
<dbReference type="ChiTaRS" id="Pitpnm2">
    <property type="organism name" value="mouse"/>
</dbReference>
<dbReference type="PRO" id="PR:Q6ZPQ6"/>
<dbReference type="Proteomes" id="UP000000589">
    <property type="component" value="Chromosome 5"/>
</dbReference>
<dbReference type="RNAct" id="Q6ZPQ6">
    <property type="molecule type" value="protein"/>
</dbReference>
<dbReference type="Bgee" id="ENSMUSG00000029406">
    <property type="expression patterns" value="Expressed in superior frontal gyrus and 206 other cell types or tissues"/>
</dbReference>
<dbReference type="ExpressionAtlas" id="Q6ZPQ6">
    <property type="expression patterns" value="baseline and differential"/>
</dbReference>
<dbReference type="GO" id="GO:0005737">
    <property type="term" value="C:cytoplasm"/>
    <property type="evidence" value="ECO:0007669"/>
    <property type="project" value="UniProtKB-KW"/>
</dbReference>
<dbReference type="GO" id="GO:0005856">
    <property type="term" value="C:cytoskeleton"/>
    <property type="evidence" value="ECO:0007669"/>
    <property type="project" value="UniProtKB-SubCell"/>
</dbReference>
<dbReference type="GO" id="GO:0012505">
    <property type="term" value="C:endomembrane system"/>
    <property type="evidence" value="ECO:0007669"/>
    <property type="project" value="UniProtKB-SubCell"/>
</dbReference>
<dbReference type="GO" id="GO:0016020">
    <property type="term" value="C:membrane"/>
    <property type="evidence" value="ECO:0007669"/>
    <property type="project" value="UniProtKB-KW"/>
</dbReference>
<dbReference type="GO" id="GO:0046872">
    <property type="term" value="F:metal ion binding"/>
    <property type="evidence" value="ECO:0007669"/>
    <property type="project" value="UniProtKB-KW"/>
</dbReference>
<dbReference type="GO" id="GO:0005543">
    <property type="term" value="F:phospholipid binding"/>
    <property type="evidence" value="ECO:0000247"/>
    <property type="project" value="MGI"/>
</dbReference>
<dbReference type="GO" id="GO:0005548">
    <property type="term" value="F:phospholipid transporter activity"/>
    <property type="evidence" value="ECO:0007669"/>
    <property type="project" value="InterPro"/>
</dbReference>
<dbReference type="CDD" id="cd08889">
    <property type="entry name" value="SRPBCC_PITPNM1-2_like"/>
    <property type="match status" value="1"/>
</dbReference>
<dbReference type="FunFam" id="3.40.50.1000:FF:000173">
    <property type="entry name" value="Membrane-associated phosphatidylinositol transfer protein 2"/>
    <property type="match status" value="1"/>
</dbReference>
<dbReference type="FunFam" id="3.30.530.20:FF:000001">
    <property type="entry name" value="Phosphatidylinositol transfer protein membrane associated 2"/>
    <property type="match status" value="1"/>
</dbReference>
<dbReference type="Gene3D" id="3.30.530.20">
    <property type="match status" value="1"/>
</dbReference>
<dbReference type="Gene3D" id="3.40.50.1000">
    <property type="entry name" value="HAD superfamily/HAD-like"/>
    <property type="match status" value="1"/>
</dbReference>
<dbReference type="InterPro" id="IPR004177">
    <property type="entry name" value="DDHD_dom"/>
</dbReference>
<dbReference type="InterPro" id="IPR036412">
    <property type="entry name" value="HAD-like_sf"/>
</dbReference>
<dbReference type="InterPro" id="IPR023214">
    <property type="entry name" value="HAD_sf"/>
</dbReference>
<dbReference type="InterPro" id="IPR031315">
    <property type="entry name" value="LNS2/PITP"/>
</dbReference>
<dbReference type="InterPro" id="IPR001666">
    <property type="entry name" value="PI_transfer"/>
</dbReference>
<dbReference type="InterPro" id="IPR055261">
    <property type="entry name" value="PI_transfer_N"/>
</dbReference>
<dbReference type="InterPro" id="IPR023393">
    <property type="entry name" value="START-like_dom_sf"/>
</dbReference>
<dbReference type="PANTHER" id="PTHR10658:SF41">
    <property type="entry name" value="MEMBRANE-ASSOCIATED PHOSPHATIDYLINOSITOL TRANSFER PROTEIN 2"/>
    <property type="match status" value="1"/>
</dbReference>
<dbReference type="PANTHER" id="PTHR10658">
    <property type="entry name" value="PHOSPHATIDYLINOSITOL TRANSFER PROTEIN"/>
    <property type="match status" value="1"/>
</dbReference>
<dbReference type="Pfam" id="PF02862">
    <property type="entry name" value="DDHD"/>
    <property type="match status" value="1"/>
</dbReference>
<dbReference type="Pfam" id="PF02121">
    <property type="entry name" value="IP_trans"/>
    <property type="match status" value="1"/>
</dbReference>
<dbReference type="Pfam" id="PF24694">
    <property type="entry name" value="LNS2_PITM1-3"/>
    <property type="match status" value="1"/>
</dbReference>
<dbReference type="Pfam" id="PF24695">
    <property type="entry name" value="PITM1-3"/>
    <property type="match status" value="1"/>
</dbReference>
<dbReference type="PRINTS" id="PR00391">
    <property type="entry name" value="PITRANSFER"/>
</dbReference>
<dbReference type="SMART" id="SM01127">
    <property type="entry name" value="DDHD"/>
    <property type="match status" value="1"/>
</dbReference>
<dbReference type="SMART" id="SM00775">
    <property type="entry name" value="LNS2"/>
    <property type="match status" value="1"/>
</dbReference>
<dbReference type="SUPFAM" id="SSF55961">
    <property type="entry name" value="Bet v1-like"/>
    <property type="match status" value="1"/>
</dbReference>
<dbReference type="SUPFAM" id="SSF56784">
    <property type="entry name" value="HAD-like"/>
    <property type="match status" value="1"/>
</dbReference>
<dbReference type="PROSITE" id="PS51043">
    <property type="entry name" value="DDHD"/>
    <property type="match status" value="1"/>
</dbReference>
<proteinExistence type="evidence at protein level"/>
<organism>
    <name type="scientific">Mus musculus</name>
    <name type="common">Mouse</name>
    <dbReference type="NCBI Taxonomy" id="10090"/>
    <lineage>
        <taxon>Eukaryota</taxon>
        <taxon>Metazoa</taxon>
        <taxon>Chordata</taxon>
        <taxon>Craniata</taxon>
        <taxon>Vertebrata</taxon>
        <taxon>Euteleostomi</taxon>
        <taxon>Mammalia</taxon>
        <taxon>Eutheria</taxon>
        <taxon>Euarchontoglires</taxon>
        <taxon>Glires</taxon>
        <taxon>Rodentia</taxon>
        <taxon>Myomorpha</taxon>
        <taxon>Muroidea</taxon>
        <taxon>Muridae</taxon>
        <taxon>Murinae</taxon>
        <taxon>Mus</taxon>
        <taxon>Mus</taxon>
    </lineage>
</organism>
<comment type="function">
    <text evidence="1">Catalyzes the transfer of phosphatidylinositol and phosphatidylcholine between membranes (in vitro). Binds calcium ions (By similarity).</text>
</comment>
<comment type="subunit">
    <text evidence="2 6">Interacts with CPNE4 (via VWFA domain) (PubMed:12522145). Interacts with PTK2B via its C-terminus (By similarity).</text>
</comment>
<comment type="subcellular location">
    <subcellularLocation>
        <location evidence="1">Endomembrane system</location>
        <topology evidence="1">Peripheral membrane protein</topology>
    </subcellularLocation>
    <subcellularLocation>
        <location evidence="9">Cytoplasm</location>
        <location evidence="9">Cytoskeleton</location>
    </subcellularLocation>
    <text>May associate with the cytoskeleton.</text>
</comment>
<comment type="alternative products">
    <event type="alternative splicing"/>
    <isoform>
        <id>Q6ZPQ6-1</id>
        <name>1</name>
        <sequence type="displayed"/>
    </isoform>
    <isoform>
        <id>Q6ZPQ6-2</id>
        <name>2</name>
        <sequence type="described" ref="VSP_017964"/>
    </isoform>
</comment>
<comment type="tissue specificity">
    <text evidence="5">Detected in retina and in the dentate gyrus of the cerebellum.</text>
</comment>
<comment type="similarity">
    <text evidence="8">Belongs to the PtdIns transfer protein family. PI transfer class IIA subfamily.</text>
</comment>
<comment type="sequence caution" evidence="8">
    <conflict type="erroneous initiation">
        <sequence resource="EMBL-CDS" id="BAC98174"/>
    </conflict>
</comment>
<protein>
    <recommendedName>
        <fullName>Membrane-associated phosphatidylinositol transfer protein 2</fullName>
    </recommendedName>
    <alternativeName>
        <fullName>Drosophila retinal degeneration B homolog 2</fullName>
        <shortName>RdgB2</shortName>
    </alternativeName>
    <alternativeName>
        <fullName>Phosphatidylinositol transfer protein, membrane-associated 2</fullName>
        <shortName>PITPnm 2</shortName>
    </alternativeName>
    <alternativeName>
        <fullName>Pyk2 N-terminal domain-interacting receptor 3</fullName>
        <shortName>NIR-3</shortName>
    </alternativeName>
</protein>
<evidence type="ECO:0000250" key="1"/>
<evidence type="ECO:0000250" key="2">
    <source>
        <dbReference type="UniProtKB" id="Q9BZ72"/>
    </source>
</evidence>
<evidence type="ECO:0000255" key="3">
    <source>
        <dbReference type="PROSITE-ProRule" id="PRU00378"/>
    </source>
</evidence>
<evidence type="ECO:0000256" key="4">
    <source>
        <dbReference type="SAM" id="MobiDB-lite"/>
    </source>
</evidence>
<evidence type="ECO:0000269" key="5">
    <source>
    </source>
</evidence>
<evidence type="ECO:0000269" key="6">
    <source>
    </source>
</evidence>
<evidence type="ECO:0000303" key="7">
    <source>
    </source>
</evidence>
<evidence type="ECO:0000305" key="8"/>
<evidence type="ECO:0000305" key="9">
    <source>
    </source>
</evidence>
<evidence type="ECO:0007744" key="10">
    <source>
    </source>
</evidence>
<evidence type="ECO:0007744" key="11">
    <source>
    </source>
</evidence>
<reference key="1">
    <citation type="journal article" date="1999" name="J. Neurosci.">
        <title>A neuronal-specific mammalian homolog of the Drosophila retinal degeneration B gene with expression restricted to the retina and dentate gyrus.</title>
        <authorList>
            <person name="Lu C."/>
            <person name="Vihtelic T.S."/>
            <person name="Hyde D.R."/>
            <person name="Li T."/>
        </authorList>
    </citation>
    <scope>NUCLEOTIDE SEQUENCE [MRNA] (ISOFORM 2)</scope>
    <scope>SUBCELLULAR LOCATION</scope>
    <scope>TISSUE SPECIFICITY</scope>
    <source>
        <strain>C57BL/6J</strain>
        <tissue>Retina</tissue>
    </source>
</reference>
<reference key="2">
    <citation type="journal article" date="2003" name="DNA Res.">
        <title>Prediction of the coding sequences of mouse homologues of KIAA gene: III. The complete nucleotide sequences of 500 mouse KIAA-homologous cDNAs identified by screening of terminal sequences of cDNA clones randomly sampled from size-fractionated libraries.</title>
        <authorList>
            <person name="Okazaki N."/>
            <person name="Kikuno R."/>
            <person name="Ohara R."/>
            <person name="Inamoto S."/>
            <person name="Koseki H."/>
            <person name="Hiraoka S."/>
            <person name="Saga Y."/>
            <person name="Nagase T."/>
            <person name="Ohara O."/>
            <person name="Koga H."/>
        </authorList>
    </citation>
    <scope>NUCLEOTIDE SEQUENCE [LARGE SCALE MRNA] (ISOFORM 1)</scope>
    <source>
        <tissue>Brain</tissue>
    </source>
</reference>
<reference key="3">
    <citation type="journal article" date="2003" name="J. Biol. Chem.">
        <title>Identification of targets for calcium signaling through the copine family of proteins. Characterization of a coiled-coil copine-binding motif.</title>
        <authorList>
            <person name="Tomsig J.L."/>
            <person name="Snyder S.L."/>
            <person name="Creutz C.E."/>
        </authorList>
    </citation>
    <scope>INTERACTION WITH CPNE4</scope>
</reference>
<reference key="4">
    <citation type="journal article" date="2006" name="Mol. Cell. Proteomics">
        <title>Comprehensive identification of phosphorylation sites in postsynaptic density preparations.</title>
        <authorList>
            <person name="Trinidad J.C."/>
            <person name="Specht C.G."/>
            <person name="Thalhammer A."/>
            <person name="Schoepfer R."/>
            <person name="Burlingame A.L."/>
        </authorList>
    </citation>
    <scope>IDENTIFICATION BY MASS SPECTROMETRY [LARGE SCALE ANALYSIS]</scope>
    <source>
        <tissue>Brain</tissue>
    </source>
</reference>
<reference key="5">
    <citation type="journal article" date="2010" name="Cell">
        <title>A tissue-specific atlas of mouse protein phosphorylation and expression.</title>
        <authorList>
            <person name="Huttlin E.L."/>
            <person name="Jedrychowski M.P."/>
            <person name="Elias J.E."/>
            <person name="Goswami T."/>
            <person name="Rad R."/>
            <person name="Beausoleil S.A."/>
            <person name="Villen J."/>
            <person name="Haas W."/>
            <person name="Sowa M.E."/>
            <person name="Gygi S.P."/>
        </authorList>
    </citation>
    <scope>PHOSPHORYLATION [LARGE SCALE ANALYSIS] AT SER-334; SER-338; SER-365; SER-586; SER-686; SER-687; SER-688 AND SER-1263</scope>
    <scope>IDENTIFICATION BY MASS SPECTROMETRY [LARGE SCALE ANALYSIS]</scope>
    <source>
        <tissue>Brain</tissue>
        <tissue>Brown adipose tissue</tissue>
        <tissue>Heart</tissue>
        <tissue>Kidney</tissue>
        <tissue>Lung</tissue>
        <tissue>Spleen</tissue>
        <tissue>Testis</tissue>
    </source>
</reference>
<reference key="6">
    <citation type="journal article" date="2014" name="Mol. Cell. Proteomics">
        <title>Immunoaffinity enrichment and mass spectrometry analysis of protein methylation.</title>
        <authorList>
            <person name="Guo A."/>
            <person name="Gu H."/>
            <person name="Zhou J."/>
            <person name="Mulhern D."/>
            <person name="Wang Y."/>
            <person name="Lee K.A."/>
            <person name="Yang V."/>
            <person name="Aguiar M."/>
            <person name="Kornhauser J."/>
            <person name="Jia X."/>
            <person name="Ren J."/>
            <person name="Beausoleil S.A."/>
            <person name="Silva J.C."/>
            <person name="Vemulapalli V."/>
            <person name="Bedford M.T."/>
            <person name="Comb M.J."/>
        </authorList>
    </citation>
    <scope>METHYLATION [LARGE SCALE ANALYSIS] AT ARG-814</scope>
    <scope>IDENTIFICATION BY MASS SPECTROMETRY [LARGE SCALE ANALYSIS]</scope>
    <source>
        <tissue>Brain</tissue>
        <tissue>Embryo</tissue>
    </source>
</reference>
<sequence length="1335" mass="148035">MIIKEYRIPLPMTVDEYRIAQLYMIQKKSRNETHGQGSGVEILENRPYTDGPGGSGQYTHKVYHVGMHIPGWFRSILPKAALRVVEESWNAYPYTRTRFTCPFVEKFSIDIETFYKTDTGENNNVFNLSPVEKSQLITDIIDIVKDPVPPSEYKTEEDPKLFQSVKTCRGPLSENWIQEYKKRLLPIMCAYKLCKVEFRYWGMQSKIERFIHDTGLRRVMVRAHRQAWCWQDEWYGLTMEKIRELEREVQLMLSRKMAQFSEEGPSELSKDSATKDQASGTTSDPGSKNGEPLGRGLKKQWSTSSKSSRSSKRGASPSRHSISEWRMQSIARDSDEGSEEEFFDAHENLYCTEEKQAKDMTKWNSNDLMDKMESPEPEESQDEIYQQSGSEFRVASSVEQLNIIEDEVSQPLAAPPSKIHVLLLVLHGGTILDTGAGDPSSKQGDTNTITNVFDTVMRVHYPSALGHLAIRLVPCPPICADAFALVSNLSPYGHDEGCLSSSQDHIPLAALPLLATSSPQYQEAVATVIQRANLAYGDFIKSQEGVTFNGQVCLIGDCVGGILAFDALCYSGQPVSESQSSSRRGSVVSMQDADLLSPGTLANAAHCSGGSGGGGSGGSSLESSRHLSRSNIDIPRSNGTEDSRRQLPRKRSDSSTYELDTIQQHQAFLSSLHASVLRNEPSSRRSSSSTMLDGAGALGKFDFEIADLFLFGCPLGLVLALRKTVIPSLDVFQLRPACQQVYNLFHPADPSASRLEPLLERRFHSLPPFSIPRYQRYPLGDGCSTLLADVLQTHNTVFQEHAAPSSPGTAPAGRGFRRASEISIASQVSGMAESYTASSIAQKGPSSLNHTPSIRRLSLLALPPPSPTTQGPRARARQVSPNLERAPCLPDLDIGEVAAKWWGQKRIDYALYCPDALTAFPTVALPHLFHASYWESTDVVSFLLRQVMRHDSSSILELDGKEVSVFTPSQPRERWQRKRTHVKLRNVAANHRINDAVANEDGPQVVTGRFMYGPLDMVTLTGEKVDVHIMTQPPSGEWLHLDTLVTNSSGRVSYTIPETHRLGVGVYPIKMVVRGDHTFADSYITVLPRGTEFVVFSIDGSFAASVSIMGSDPKVRAGAVDVVRHWQDLGYLIIYVTGRPDMQKQRVVAWLAQHNFPHGVVSFCDGLVHDPLRHKANFLKLLISELHLRAHAAYGSTKDVAVYNSISLSPMHIYIVGRPTKKLQQQCQFITDGYAAHLAQLKYNHRARPARNTATRMALRKGSFGLPGQSDFLRSRNHLLRTISAQPSGPSHRHDRTQTQMDSEQRGQRSMSVAASCWGRAMAGRLEPGAATGPK</sequence>
<feature type="chain" id="PRO_0000232742" description="Membrane-associated phosphatidylinositol transfer protein 2">
    <location>
        <begin position="1"/>
        <end position="1335"/>
    </location>
</feature>
<feature type="domain" description="DDHD" evidence="3">
    <location>
        <begin position="701"/>
        <end position="949"/>
    </location>
</feature>
<feature type="region of interest" description="Disordered" evidence="4">
    <location>
        <begin position="32"/>
        <end position="51"/>
    </location>
</feature>
<feature type="region of interest" description="Disordered" evidence="4">
    <location>
        <begin position="262"/>
        <end position="341"/>
    </location>
</feature>
<feature type="region of interest" description="Disordered" evidence="4">
    <location>
        <begin position="606"/>
        <end position="657"/>
    </location>
</feature>
<feature type="region of interest" description="Disordered" evidence="4">
    <location>
        <begin position="861"/>
        <end position="880"/>
    </location>
</feature>
<feature type="region of interest" description="Disordered" evidence="4">
    <location>
        <begin position="1282"/>
        <end position="1313"/>
    </location>
</feature>
<feature type="compositionally biased region" description="Polar residues" evidence="4">
    <location>
        <begin position="275"/>
        <end position="286"/>
    </location>
</feature>
<feature type="compositionally biased region" description="Low complexity" evidence="4">
    <location>
        <begin position="299"/>
        <end position="319"/>
    </location>
</feature>
<feature type="compositionally biased region" description="Gly residues" evidence="4">
    <location>
        <begin position="609"/>
        <end position="618"/>
    </location>
</feature>
<feature type="compositionally biased region" description="Basic and acidic residues" evidence="4">
    <location>
        <begin position="639"/>
        <end position="653"/>
    </location>
</feature>
<feature type="compositionally biased region" description="Polar residues" evidence="4">
    <location>
        <begin position="1298"/>
        <end position="1313"/>
    </location>
</feature>
<feature type="modified residue" description="Phosphoserine" evidence="10">
    <location>
        <position position="334"/>
    </location>
</feature>
<feature type="modified residue" description="Phosphoserine" evidence="10">
    <location>
        <position position="338"/>
    </location>
</feature>
<feature type="modified residue" description="Phosphoserine" evidence="10">
    <location>
        <position position="365"/>
    </location>
</feature>
<feature type="modified residue" description="Phosphoserine" evidence="10">
    <location>
        <position position="586"/>
    </location>
</feature>
<feature type="modified residue" description="Phosphoserine" evidence="2">
    <location>
        <position position="630"/>
    </location>
</feature>
<feature type="modified residue" description="Phosphoserine" evidence="10">
    <location>
        <position position="686"/>
    </location>
</feature>
<feature type="modified residue" description="Phosphoserine" evidence="10">
    <location>
        <position position="687"/>
    </location>
</feature>
<feature type="modified residue" description="Phosphoserine" evidence="10">
    <location>
        <position position="688"/>
    </location>
</feature>
<feature type="modified residue" description="Omega-N-methylarginine" evidence="11">
    <location>
        <position position="814"/>
    </location>
</feature>
<feature type="modified residue" description="Phosphoserine" evidence="10">
    <location>
        <position position="1263"/>
    </location>
</feature>
<feature type="splice variant" id="VSP_017964" description="In isoform 2." evidence="7">
    <original>KGPSSLNHTPSIRRLSLLALPPPSPTTQGPRARARQVSPNLERAPCLPDLDIGEV</original>
    <variation>I</variation>
    <location>
        <begin position="843"/>
        <end position="897"/>
    </location>
</feature>
<keyword id="KW-0025">Alternative splicing</keyword>
<keyword id="KW-0106">Calcium</keyword>
<keyword id="KW-0963">Cytoplasm</keyword>
<keyword id="KW-0206">Cytoskeleton</keyword>
<keyword id="KW-0446">Lipid-binding</keyword>
<keyword id="KW-0472">Membrane</keyword>
<keyword id="KW-0479">Metal-binding</keyword>
<keyword id="KW-0488">Methylation</keyword>
<keyword id="KW-0597">Phosphoprotein</keyword>
<keyword id="KW-1185">Reference proteome</keyword>
<accession>Q6ZPQ6</accession>
<accession>Q9R1P5</accession>
<gene>
    <name type="primary">Pitpnm2</name>
    <name type="synonym">Kiaa1457</name>
    <name type="synonym">Nir3</name>
</gene>